<gene>
    <name type="primary">btr</name>
    <name type="ordered locus">BP1197</name>
</gene>
<name>BTR_BORPE</name>
<feature type="chain" id="PRO_0000100143" description="Transcriptional regulatory protein btr">
    <location>
        <begin position="1"/>
        <end position="242"/>
    </location>
</feature>
<feature type="domain" description="HTH crp-type" evidence="1">
    <location>
        <begin position="158"/>
        <end position="231"/>
    </location>
</feature>
<feature type="DNA-binding region" description="H-T-H motif" evidence="1">
    <location>
        <begin position="191"/>
        <end position="210"/>
    </location>
</feature>
<feature type="sequence conflict" description="In Ref. 1; AAC36850." evidence="2" ref="1">
    <original>GMPANEVEKLDELVKERVRVERGKTLYELDDPLDAVYG</original>
    <variation>ACLPTKSRNWTNSSRRPCAWSAAKRSTNSTIPWSRLR</variation>
    <location>
        <begin position="27"/>
        <end position="64"/>
    </location>
</feature>
<feature type="sequence conflict" description="In Ref. 1; AAC36850." evidence="2" ref="1">
    <original>D</original>
    <variation>V</variation>
    <location>
        <position position="96"/>
    </location>
</feature>
<feature type="sequence conflict" description="In Ref. 1; AAC36850." evidence="2" ref="1">
    <original>RYAALGYSSTEFVL</original>
    <variation>ATRRSAIRRPNSCV</variation>
    <location>
        <begin position="174"/>
        <end position="187"/>
    </location>
</feature>
<feature type="sequence conflict" description="In Ref. 1; AAC36850." evidence="2" ref="1">
    <original>R</original>
    <variation>A</variation>
    <location>
        <position position="223"/>
    </location>
</feature>
<proteinExistence type="predicted"/>
<keyword id="KW-0238">DNA-binding</keyword>
<keyword id="KW-1185">Reference proteome</keyword>
<keyword id="KW-0804">Transcription</keyword>
<keyword id="KW-0805">Transcription regulation</keyword>
<sequence>MQRRVPLSPDAAHCSSCMLGHVCVPVGMPANEVEKLDELVKERVRVERGKTLYELDDPLDAVYGVRFGSLKTQLEDSSGQLQITGFHLPGEIVGLDGMIESKHVSSAVALEDSEVCVIRLPEIDRVSTQLPSLQQQFRRLMSREITRSHQMLATVGAMRSEQRLAAFLLNLSQRYAALGYSSTEFVLRMSREEIGNYLGLTLETVSRLFSRFGREGLIRINQREVRLIDLPGLKQLIGQESC</sequence>
<accession>Q08530</accession>
<comment type="function">
    <text>May regulate gene expression in response to changes in oxygen levels or to changes in the redox potential of the bacterial environment.</text>
</comment>
<organism>
    <name type="scientific">Bordetella pertussis (strain Tohama I / ATCC BAA-589 / NCTC 13251)</name>
    <dbReference type="NCBI Taxonomy" id="257313"/>
    <lineage>
        <taxon>Bacteria</taxon>
        <taxon>Pseudomonadati</taxon>
        <taxon>Pseudomonadota</taxon>
        <taxon>Betaproteobacteria</taxon>
        <taxon>Burkholderiales</taxon>
        <taxon>Alcaligenaceae</taxon>
        <taxon>Bordetella</taxon>
    </lineage>
</organism>
<protein>
    <recommendedName>
        <fullName>Transcriptional regulatory protein btr</fullName>
    </recommendedName>
</protein>
<dbReference type="EMBL" id="L20602">
    <property type="protein sequence ID" value="AAC36850.1"/>
    <property type="molecule type" value="Unassigned_DNA"/>
</dbReference>
<dbReference type="EMBL" id="BX640414">
    <property type="protein sequence ID" value="CAE41493.1"/>
    <property type="molecule type" value="Genomic_DNA"/>
</dbReference>
<dbReference type="PIR" id="A49926">
    <property type="entry name" value="A49926"/>
</dbReference>
<dbReference type="RefSeq" id="NP_879971.1">
    <property type="nucleotide sequence ID" value="NC_002929.2"/>
</dbReference>
<dbReference type="RefSeq" id="WP_010930241.1">
    <property type="nucleotide sequence ID" value="NZ_CP039022.1"/>
</dbReference>
<dbReference type="SMR" id="Q08530"/>
<dbReference type="STRING" id="257313.BP1197"/>
<dbReference type="PaxDb" id="257313-BP1197"/>
<dbReference type="GeneID" id="69601110"/>
<dbReference type="KEGG" id="bpe:BP1197"/>
<dbReference type="PATRIC" id="fig|257313.5.peg.1289"/>
<dbReference type="eggNOG" id="COG0664">
    <property type="taxonomic scope" value="Bacteria"/>
</dbReference>
<dbReference type="HOGENOM" id="CLU_075053_0_2_4"/>
<dbReference type="Proteomes" id="UP000002676">
    <property type="component" value="Chromosome"/>
</dbReference>
<dbReference type="GO" id="GO:0005829">
    <property type="term" value="C:cytosol"/>
    <property type="evidence" value="ECO:0007669"/>
    <property type="project" value="TreeGrafter"/>
</dbReference>
<dbReference type="GO" id="GO:0003677">
    <property type="term" value="F:DNA binding"/>
    <property type="evidence" value="ECO:0007669"/>
    <property type="project" value="UniProtKB-KW"/>
</dbReference>
<dbReference type="GO" id="GO:0003700">
    <property type="term" value="F:DNA-binding transcription factor activity"/>
    <property type="evidence" value="ECO:0007669"/>
    <property type="project" value="InterPro"/>
</dbReference>
<dbReference type="CDD" id="cd00038">
    <property type="entry name" value="CAP_ED"/>
    <property type="match status" value="1"/>
</dbReference>
<dbReference type="CDD" id="cd00092">
    <property type="entry name" value="HTH_CRP"/>
    <property type="match status" value="1"/>
</dbReference>
<dbReference type="FunFam" id="1.10.10.10:FF:000028">
    <property type="entry name" value="Fumarate/nitrate reduction transcriptional regulator Fnr"/>
    <property type="match status" value="1"/>
</dbReference>
<dbReference type="Gene3D" id="2.60.120.10">
    <property type="entry name" value="Jelly Rolls"/>
    <property type="match status" value="1"/>
</dbReference>
<dbReference type="Gene3D" id="1.10.10.10">
    <property type="entry name" value="Winged helix-like DNA-binding domain superfamily/Winged helix DNA-binding domain"/>
    <property type="match status" value="1"/>
</dbReference>
<dbReference type="InterPro" id="IPR000595">
    <property type="entry name" value="cNMP-bd_dom"/>
</dbReference>
<dbReference type="InterPro" id="IPR018490">
    <property type="entry name" value="cNMP-bd_dom_sf"/>
</dbReference>
<dbReference type="InterPro" id="IPR050397">
    <property type="entry name" value="Env_Response_Regulators"/>
</dbReference>
<dbReference type="InterPro" id="IPR012318">
    <property type="entry name" value="HTH_CRP"/>
</dbReference>
<dbReference type="InterPro" id="IPR014710">
    <property type="entry name" value="RmlC-like_jellyroll"/>
</dbReference>
<dbReference type="InterPro" id="IPR018335">
    <property type="entry name" value="Tscrpt_reg_HTH_Crp-type_CS"/>
</dbReference>
<dbReference type="InterPro" id="IPR036388">
    <property type="entry name" value="WH-like_DNA-bd_sf"/>
</dbReference>
<dbReference type="InterPro" id="IPR036390">
    <property type="entry name" value="WH_DNA-bd_sf"/>
</dbReference>
<dbReference type="PANTHER" id="PTHR24567">
    <property type="entry name" value="CRP FAMILY TRANSCRIPTIONAL REGULATORY PROTEIN"/>
    <property type="match status" value="1"/>
</dbReference>
<dbReference type="PANTHER" id="PTHR24567:SF75">
    <property type="entry name" value="FUMARATE AND NITRATE REDUCTION REGULATORY PROTEIN"/>
    <property type="match status" value="1"/>
</dbReference>
<dbReference type="Pfam" id="PF00027">
    <property type="entry name" value="cNMP_binding"/>
    <property type="match status" value="1"/>
</dbReference>
<dbReference type="Pfam" id="PF13545">
    <property type="entry name" value="HTH_Crp_2"/>
    <property type="match status" value="1"/>
</dbReference>
<dbReference type="PRINTS" id="PR00034">
    <property type="entry name" value="HTHCRP"/>
</dbReference>
<dbReference type="SMART" id="SM00100">
    <property type="entry name" value="cNMP"/>
    <property type="match status" value="1"/>
</dbReference>
<dbReference type="SMART" id="SM00419">
    <property type="entry name" value="HTH_CRP"/>
    <property type="match status" value="1"/>
</dbReference>
<dbReference type="SUPFAM" id="SSF51206">
    <property type="entry name" value="cAMP-binding domain-like"/>
    <property type="match status" value="1"/>
</dbReference>
<dbReference type="SUPFAM" id="SSF46785">
    <property type="entry name" value="Winged helix' DNA-binding domain"/>
    <property type="match status" value="1"/>
</dbReference>
<dbReference type="PROSITE" id="PS00042">
    <property type="entry name" value="HTH_CRP_1"/>
    <property type="match status" value="1"/>
</dbReference>
<dbReference type="PROSITE" id="PS51063">
    <property type="entry name" value="HTH_CRP_2"/>
    <property type="match status" value="1"/>
</dbReference>
<evidence type="ECO:0000255" key="1">
    <source>
        <dbReference type="PROSITE-ProRule" id="PRU00387"/>
    </source>
</evidence>
<evidence type="ECO:0000305" key="2"/>
<reference key="1">
    <citation type="journal article" date="1993" name="J. Bacteriol.">
        <title>Cloning and characterization of btr, a Bordetella pertussis gene encoding an FNR-like transcriptional regulator.</title>
        <authorList>
            <person name="Bannan J.D."/>
            <person name="Moran M.J."/>
            <person name="Macinnnes J.I."/>
            <person name="Soltes G.A."/>
            <person name="Friedman R.L."/>
        </authorList>
    </citation>
    <scope>NUCLEOTIDE SEQUENCE [GENOMIC DNA]</scope>
    <source>
        <strain>BP504</strain>
    </source>
</reference>
<reference key="2">
    <citation type="journal article" date="2003" name="Nat. Genet.">
        <title>Comparative analysis of the genome sequences of Bordetella pertussis, Bordetella parapertussis and Bordetella bronchiseptica.</title>
        <authorList>
            <person name="Parkhill J."/>
            <person name="Sebaihia M."/>
            <person name="Preston A."/>
            <person name="Murphy L.D."/>
            <person name="Thomson N.R."/>
            <person name="Harris D.E."/>
            <person name="Holden M.T.G."/>
            <person name="Churcher C.M."/>
            <person name="Bentley S.D."/>
            <person name="Mungall K.L."/>
            <person name="Cerdeno-Tarraga A.-M."/>
            <person name="Temple L."/>
            <person name="James K.D."/>
            <person name="Harris B."/>
            <person name="Quail M.A."/>
            <person name="Achtman M."/>
            <person name="Atkin R."/>
            <person name="Baker S."/>
            <person name="Basham D."/>
            <person name="Bason N."/>
            <person name="Cherevach I."/>
            <person name="Chillingworth T."/>
            <person name="Collins M."/>
            <person name="Cronin A."/>
            <person name="Davis P."/>
            <person name="Doggett J."/>
            <person name="Feltwell T."/>
            <person name="Goble A."/>
            <person name="Hamlin N."/>
            <person name="Hauser H."/>
            <person name="Holroyd S."/>
            <person name="Jagels K."/>
            <person name="Leather S."/>
            <person name="Moule S."/>
            <person name="Norberczak H."/>
            <person name="O'Neil S."/>
            <person name="Ormond D."/>
            <person name="Price C."/>
            <person name="Rabbinowitsch E."/>
            <person name="Rutter S."/>
            <person name="Sanders M."/>
            <person name="Saunders D."/>
            <person name="Seeger K."/>
            <person name="Sharp S."/>
            <person name="Simmonds M."/>
            <person name="Skelton J."/>
            <person name="Squares R."/>
            <person name="Squares S."/>
            <person name="Stevens K."/>
            <person name="Unwin L."/>
            <person name="Whitehead S."/>
            <person name="Barrell B.G."/>
            <person name="Maskell D.J."/>
        </authorList>
    </citation>
    <scope>NUCLEOTIDE SEQUENCE [LARGE SCALE GENOMIC DNA]</scope>
    <source>
        <strain>Tohama I / ATCC BAA-589 / NCTC 13251</strain>
    </source>
</reference>